<protein>
    <recommendedName>
        <fullName evidence="6">PI-stichotoxin-She2a</fullName>
        <shortName evidence="6">PI-SHTX-She2a</shortName>
    </recommendedName>
    <alternativeName>
        <fullName evidence="7">Kunitz-type protease inhibitor ShPI-I</fullName>
    </alternativeName>
</protein>
<organism>
    <name type="scientific">Stichodactyla helianthus</name>
    <name type="common">Sun anemone</name>
    <name type="synonym">Stoichactis helianthus</name>
    <dbReference type="NCBI Taxonomy" id="6123"/>
    <lineage>
        <taxon>Eukaryota</taxon>
        <taxon>Metazoa</taxon>
        <taxon>Cnidaria</taxon>
        <taxon>Anthozoa</taxon>
        <taxon>Hexacorallia</taxon>
        <taxon>Actiniaria</taxon>
        <taxon>Stichodactylidae</taxon>
        <taxon>Stichodactyla</taxon>
    </lineage>
</organism>
<dbReference type="PIR" id="S30332">
    <property type="entry name" value="S30332"/>
</dbReference>
<dbReference type="PDB" id="1SHP">
    <property type="method" value="NMR"/>
    <property type="chains" value="A=1-55"/>
</dbReference>
<dbReference type="PDB" id="3M7Q">
    <property type="method" value="X-ray"/>
    <property type="resolution" value="1.70 A"/>
    <property type="chains" value="B=1-55"/>
</dbReference>
<dbReference type="PDB" id="3OFW">
    <property type="method" value="X-ray"/>
    <property type="resolution" value="2.50 A"/>
    <property type="chains" value="A=1-54"/>
</dbReference>
<dbReference type="PDB" id="3T62">
    <property type="method" value="X-ray"/>
    <property type="resolution" value="2.00 A"/>
    <property type="chains" value="D/E/F=1-54"/>
</dbReference>
<dbReference type="PDB" id="3UOU">
    <property type="method" value="X-ray"/>
    <property type="resolution" value="2.00 A"/>
    <property type="chains" value="B=1-55"/>
</dbReference>
<dbReference type="PDBsum" id="1SHP"/>
<dbReference type="PDBsum" id="3M7Q"/>
<dbReference type="PDBsum" id="3OFW"/>
<dbReference type="PDBsum" id="3T62"/>
<dbReference type="PDBsum" id="3UOU"/>
<dbReference type="SMR" id="P31713"/>
<dbReference type="EvolutionaryTrace" id="P31713"/>
<dbReference type="GO" id="GO:0005615">
    <property type="term" value="C:extracellular space"/>
    <property type="evidence" value="ECO:0007669"/>
    <property type="project" value="TreeGrafter"/>
</dbReference>
<dbReference type="GO" id="GO:0042151">
    <property type="term" value="C:nematocyst"/>
    <property type="evidence" value="ECO:0007669"/>
    <property type="project" value="UniProtKB-SubCell"/>
</dbReference>
<dbReference type="GO" id="GO:0019828">
    <property type="term" value="F:aspartic-type endopeptidase inhibitor activity"/>
    <property type="evidence" value="ECO:0007669"/>
    <property type="project" value="UniProtKB-KW"/>
</dbReference>
<dbReference type="GO" id="GO:0004867">
    <property type="term" value="F:serine-type endopeptidase inhibitor activity"/>
    <property type="evidence" value="ECO:0007669"/>
    <property type="project" value="UniProtKB-KW"/>
</dbReference>
<dbReference type="CDD" id="cd22618">
    <property type="entry name" value="Kunitz_SHPI"/>
    <property type="match status" value="1"/>
</dbReference>
<dbReference type="FunFam" id="4.10.410.10:FF:000021">
    <property type="entry name" value="Serine protease inhibitor, putative"/>
    <property type="match status" value="1"/>
</dbReference>
<dbReference type="Gene3D" id="4.10.410.10">
    <property type="entry name" value="Pancreatic trypsin inhibitor Kunitz domain"/>
    <property type="match status" value="1"/>
</dbReference>
<dbReference type="InterPro" id="IPR002223">
    <property type="entry name" value="Kunitz_BPTI"/>
</dbReference>
<dbReference type="InterPro" id="IPR036880">
    <property type="entry name" value="Kunitz_BPTI_sf"/>
</dbReference>
<dbReference type="InterPro" id="IPR020901">
    <property type="entry name" value="Prtase_inh_Kunz-CS"/>
</dbReference>
<dbReference type="InterPro" id="IPR050098">
    <property type="entry name" value="TFPI/VKTCI-like"/>
</dbReference>
<dbReference type="PANTHER" id="PTHR10083:SF381">
    <property type="entry name" value="BPTI_KUNITZ INHIBITOR DOMAIN-CONTAINING PROTEIN"/>
    <property type="match status" value="1"/>
</dbReference>
<dbReference type="PANTHER" id="PTHR10083">
    <property type="entry name" value="KUNITZ-TYPE PROTEASE INHIBITOR-RELATED"/>
    <property type="match status" value="1"/>
</dbReference>
<dbReference type="Pfam" id="PF00014">
    <property type="entry name" value="Kunitz_BPTI"/>
    <property type="match status" value="1"/>
</dbReference>
<dbReference type="PRINTS" id="PR00759">
    <property type="entry name" value="BASICPTASE"/>
</dbReference>
<dbReference type="SMART" id="SM00131">
    <property type="entry name" value="KU"/>
    <property type="match status" value="1"/>
</dbReference>
<dbReference type="SUPFAM" id="SSF57362">
    <property type="entry name" value="BPTI-like"/>
    <property type="match status" value="1"/>
</dbReference>
<dbReference type="PROSITE" id="PS00280">
    <property type="entry name" value="BPTI_KUNITZ_1"/>
    <property type="match status" value="1"/>
</dbReference>
<dbReference type="PROSITE" id="PS50279">
    <property type="entry name" value="BPTI_KUNITZ_2"/>
    <property type="match status" value="1"/>
</dbReference>
<keyword id="KW-0002">3D-structure</keyword>
<keyword id="KW-0062">Aspartic protease inhibitor</keyword>
<keyword id="KW-0903">Direct protein sequencing</keyword>
<keyword id="KW-1015">Disulfide bond</keyword>
<keyword id="KW-0166">Nematocyst</keyword>
<keyword id="KW-0646">Protease inhibitor</keyword>
<keyword id="KW-0964">Secreted</keyword>
<keyword id="KW-0722">Serine protease inhibitor</keyword>
<name>VKT1_STIHL</name>
<reference key="1">
    <citation type="journal article" date="1996" name="Toxicon">
        <title>Purification, characterization and immobilization of proteinase inhibitors from Stichodactyla helianthus.</title>
        <authorList>
            <person name="Delfin J."/>
            <person name="Martinez I."/>
            <person name="Antuch W."/>
            <person name="Morera V."/>
            <person name="Gonzalez Y."/>
            <person name="Rodriguez R."/>
            <person name="Marquez M."/>
            <person name="Saroyan A."/>
            <person name="Larionova N."/>
            <person name="Diaz J."/>
            <person name="Padron G."/>
            <person name="Chavez M."/>
        </authorList>
    </citation>
    <scope>PROTEIN SEQUENCE</scope>
    <scope>FUNCTION</scope>
    <scope>MASS SPECTROMETRY</scope>
</reference>
<reference key="2">
    <citation type="journal article" date="2012" name="Toxicon">
        <title>Development of a rational nomenclature for naming peptide and protein toxins from sea anemones.</title>
        <authorList>
            <person name="Oliveira J.S."/>
            <person name="Fuentes-Silva D."/>
            <person name="King G.F."/>
        </authorList>
    </citation>
    <scope>NOMENCLATURE</scope>
</reference>
<reference key="3">
    <citation type="journal article" date="1993" name="Eur. J. Biochem.">
        <title>The NMR solution structure of a Kunitz-type proteinase inhibitor from the sea anemone Stichodactyla helianthus.</title>
        <authorList>
            <person name="Antuch W."/>
            <person name="Berndt K.D."/>
            <person name="Chavez M.A."/>
            <person name="Delfin J."/>
            <person name="Wuethrich K."/>
        </authorList>
    </citation>
    <scope>STRUCTURE BY NMR</scope>
    <scope>DISULFIDE BONDS</scope>
</reference>
<reference key="4">
    <citation type="journal article" date="2012" name="Acta Crystallogr. F">
        <title>Structure of the recombinant BPTI/Kunitz-type inhibitor rShPI-1A from the marine invertebrate Stichodactyla helianthus.</title>
        <authorList>
            <person name="Garcia-Fernandez R."/>
            <person name="Pons T."/>
            <person name="Meyer A."/>
            <person name="Perbandt M."/>
            <person name="Gonzalez-Gonzalez Y."/>
            <person name="Gil D."/>
            <person name="de Los Angeles Chavez M."/>
            <person name="Betzel C."/>
            <person name="Redecke L."/>
        </authorList>
    </citation>
    <scope>X-RAY CRYSTALLOGRAPHY (2.5 ANGSTROMS)</scope>
    <scope>DISULFIDE BOND</scope>
</reference>
<reference key="5">
    <citation type="journal article" date="2012" name="J. Struct. Biol.">
        <title>Structural insights into serine protease inhibition by a marine invertebrate BPTI Kunitz-type inhibitor.</title>
        <authorList>
            <person name="Garcia-Fernandez R."/>
            <person name="Pons T."/>
            <person name="Perbandt M."/>
            <person name="Valiente P.A."/>
            <person name="Talavera A."/>
            <person name="Gonzalez-Gonzalez Y."/>
            <person name="Rehders D."/>
            <person name="Chavez M.A."/>
            <person name="Betzel C."/>
            <person name="Redecke L."/>
        </authorList>
    </citation>
    <scope>X-RAY CRYSTALLOGRAPHY (1.7 ANGSTROMS) IN COMPLEX WITH TRYPSIN</scope>
    <scope>FUNCTION</scope>
    <scope>REACTIVE BOND</scope>
    <scope>DISULFIDE BONDS</scope>
</reference>
<evidence type="ECO:0000255" key="1">
    <source>
        <dbReference type="PROSITE-ProRule" id="PRU00031"/>
    </source>
</evidence>
<evidence type="ECO:0000269" key="2">
    <source>
    </source>
</evidence>
<evidence type="ECO:0000269" key="3">
    <source>
    </source>
</evidence>
<evidence type="ECO:0000269" key="4">
    <source>
    </source>
</evidence>
<evidence type="ECO:0000269" key="5">
    <source>
    </source>
</evidence>
<evidence type="ECO:0000303" key="6">
    <source>
    </source>
</evidence>
<evidence type="ECO:0000303" key="7">
    <source>
    </source>
</evidence>
<evidence type="ECO:0000305" key="8"/>
<evidence type="ECO:0000305" key="9">
    <source>
    </source>
</evidence>
<evidence type="ECO:0000312" key="10">
    <source>
        <dbReference type="PDB" id="1SHP"/>
    </source>
</evidence>
<evidence type="ECO:0000312" key="11">
    <source>
        <dbReference type="PDB" id="3M7Q"/>
    </source>
</evidence>
<evidence type="ECO:0000312" key="12">
    <source>
        <dbReference type="PDB" id="3OFW"/>
    </source>
</evidence>
<evidence type="ECO:0000312" key="13">
    <source>
        <dbReference type="PDB" id="3T62"/>
    </source>
</evidence>
<evidence type="ECO:0000312" key="14">
    <source>
        <dbReference type="PDB" id="3UOU"/>
    </source>
</evidence>
<evidence type="ECO:0007829" key="15">
    <source>
        <dbReference type="PDB" id="3M7Q"/>
    </source>
</evidence>
<accession>P31713</accession>
<proteinExistence type="evidence at protein level"/>
<comment type="function">
    <text evidence="2 5">Active against serine, cysteine, and aspartic proteases. Can bind vertebrate trypsin and chymotrypsin.</text>
</comment>
<comment type="subcellular location">
    <subcellularLocation>
        <location evidence="9">Secreted</location>
    </subcellularLocation>
    <subcellularLocation>
        <location evidence="8">Nematocyst</location>
    </subcellularLocation>
</comment>
<comment type="mass spectrometry"/>
<comment type="similarity">
    <text evidence="8">Belongs to the venom Kunitz-type family. Sea anemone type 2 potassium channel toxin subfamily.</text>
</comment>
<feature type="chain" id="PRO_0000155419" description="PI-stichotoxin-She2a" evidence="5">
    <location>
        <begin position="1"/>
        <end position="55"/>
    </location>
</feature>
<feature type="domain" description="BPTI/Kunitz inhibitor" evidence="1">
    <location>
        <begin position="3"/>
        <end position="53"/>
    </location>
</feature>
<feature type="site" description="Reactive bond for trypsin" evidence="2">
    <location>
        <begin position="13"/>
        <end position="14"/>
    </location>
</feature>
<feature type="disulfide bond" evidence="2 3 4 10 11 12 13 14">
    <location>
        <begin position="3"/>
        <end position="53"/>
    </location>
</feature>
<feature type="disulfide bond" evidence="2 3 4 10 11 12 13 14">
    <location>
        <begin position="12"/>
        <end position="36"/>
    </location>
</feature>
<feature type="disulfide bond" evidence="2 3 4 10 11 12 13 14">
    <location>
        <begin position="28"/>
        <end position="49"/>
    </location>
</feature>
<feature type="helix" evidence="15">
    <location>
        <begin position="1"/>
        <end position="4"/>
    </location>
</feature>
<feature type="strand" evidence="15">
    <location>
        <begin position="16"/>
        <end position="22"/>
    </location>
</feature>
<feature type="turn" evidence="15">
    <location>
        <begin position="23"/>
        <end position="26"/>
    </location>
</feature>
<feature type="strand" evidence="15">
    <location>
        <begin position="27"/>
        <end position="33"/>
    </location>
</feature>
<feature type="strand" evidence="15">
    <location>
        <begin position="35"/>
        <end position="37"/>
    </location>
</feature>
<feature type="strand" evidence="15">
    <location>
        <begin position="43"/>
        <end position="45"/>
    </location>
</feature>
<feature type="helix" evidence="15">
    <location>
        <begin position="46"/>
        <end position="52"/>
    </location>
</feature>
<sequence>SICSEPKKVGRCKGYFPRFYFDSETGKCTPFIYGGCGGNGNNFETLHQCRAICRA</sequence>